<name>KCY_MAGMM</name>
<keyword id="KW-0067">ATP-binding</keyword>
<keyword id="KW-0963">Cytoplasm</keyword>
<keyword id="KW-0418">Kinase</keyword>
<keyword id="KW-0547">Nucleotide-binding</keyword>
<keyword id="KW-1185">Reference proteome</keyword>
<keyword id="KW-0808">Transferase</keyword>
<feature type="chain" id="PRO_1000078340" description="Cytidylate kinase">
    <location>
        <begin position="1"/>
        <end position="225"/>
    </location>
</feature>
<feature type="region of interest" description="Disordered" evidence="2">
    <location>
        <begin position="169"/>
        <end position="195"/>
    </location>
</feature>
<feature type="compositionally biased region" description="Basic and acidic residues" evidence="2">
    <location>
        <begin position="169"/>
        <end position="185"/>
    </location>
</feature>
<feature type="binding site" evidence="1">
    <location>
        <begin position="11"/>
        <end position="19"/>
    </location>
    <ligand>
        <name>ATP</name>
        <dbReference type="ChEBI" id="CHEBI:30616"/>
    </ligand>
</feature>
<comment type="catalytic activity">
    <reaction evidence="1">
        <text>CMP + ATP = CDP + ADP</text>
        <dbReference type="Rhea" id="RHEA:11600"/>
        <dbReference type="ChEBI" id="CHEBI:30616"/>
        <dbReference type="ChEBI" id="CHEBI:58069"/>
        <dbReference type="ChEBI" id="CHEBI:60377"/>
        <dbReference type="ChEBI" id="CHEBI:456216"/>
        <dbReference type="EC" id="2.7.4.25"/>
    </reaction>
</comment>
<comment type="catalytic activity">
    <reaction evidence="1">
        <text>dCMP + ATP = dCDP + ADP</text>
        <dbReference type="Rhea" id="RHEA:25094"/>
        <dbReference type="ChEBI" id="CHEBI:30616"/>
        <dbReference type="ChEBI" id="CHEBI:57566"/>
        <dbReference type="ChEBI" id="CHEBI:58593"/>
        <dbReference type="ChEBI" id="CHEBI:456216"/>
        <dbReference type="EC" id="2.7.4.25"/>
    </reaction>
</comment>
<comment type="subcellular location">
    <subcellularLocation>
        <location evidence="1">Cytoplasm</location>
    </subcellularLocation>
</comment>
<comment type="similarity">
    <text evidence="1">Belongs to the cytidylate kinase family. Type 1 subfamily.</text>
</comment>
<proteinExistence type="inferred from homology"/>
<dbReference type="EC" id="2.7.4.25" evidence="1"/>
<dbReference type="EMBL" id="CP000471">
    <property type="protein sequence ID" value="ABK42700.1"/>
    <property type="molecule type" value="Genomic_DNA"/>
</dbReference>
<dbReference type="RefSeq" id="WP_011711873.1">
    <property type="nucleotide sequence ID" value="NC_008576.1"/>
</dbReference>
<dbReference type="SMR" id="A0L407"/>
<dbReference type="STRING" id="156889.Mmc1_0173"/>
<dbReference type="KEGG" id="mgm:Mmc1_0173"/>
<dbReference type="eggNOG" id="COG0283">
    <property type="taxonomic scope" value="Bacteria"/>
</dbReference>
<dbReference type="HOGENOM" id="CLU_079959_0_1_5"/>
<dbReference type="Proteomes" id="UP000002586">
    <property type="component" value="Chromosome"/>
</dbReference>
<dbReference type="GO" id="GO:0005737">
    <property type="term" value="C:cytoplasm"/>
    <property type="evidence" value="ECO:0007669"/>
    <property type="project" value="UniProtKB-SubCell"/>
</dbReference>
<dbReference type="GO" id="GO:0005524">
    <property type="term" value="F:ATP binding"/>
    <property type="evidence" value="ECO:0007669"/>
    <property type="project" value="UniProtKB-UniRule"/>
</dbReference>
<dbReference type="GO" id="GO:0036430">
    <property type="term" value="F:CMP kinase activity"/>
    <property type="evidence" value="ECO:0007669"/>
    <property type="project" value="RHEA"/>
</dbReference>
<dbReference type="GO" id="GO:0036431">
    <property type="term" value="F:dCMP kinase activity"/>
    <property type="evidence" value="ECO:0007669"/>
    <property type="project" value="RHEA"/>
</dbReference>
<dbReference type="GO" id="GO:0006220">
    <property type="term" value="P:pyrimidine nucleotide metabolic process"/>
    <property type="evidence" value="ECO:0007669"/>
    <property type="project" value="UniProtKB-UniRule"/>
</dbReference>
<dbReference type="CDD" id="cd02020">
    <property type="entry name" value="CMPK"/>
    <property type="match status" value="1"/>
</dbReference>
<dbReference type="Gene3D" id="3.40.50.300">
    <property type="entry name" value="P-loop containing nucleotide triphosphate hydrolases"/>
    <property type="match status" value="1"/>
</dbReference>
<dbReference type="HAMAP" id="MF_00238">
    <property type="entry name" value="Cytidyl_kinase_type1"/>
    <property type="match status" value="1"/>
</dbReference>
<dbReference type="InterPro" id="IPR003136">
    <property type="entry name" value="Cytidylate_kin"/>
</dbReference>
<dbReference type="InterPro" id="IPR011994">
    <property type="entry name" value="Cytidylate_kinase_dom"/>
</dbReference>
<dbReference type="InterPro" id="IPR027417">
    <property type="entry name" value="P-loop_NTPase"/>
</dbReference>
<dbReference type="NCBIfam" id="TIGR00017">
    <property type="entry name" value="cmk"/>
    <property type="match status" value="1"/>
</dbReference>
<dbReference type="Pfam" id="PF02224">
    <property type="entry name" value="Cytidylate_kin"/>
    <property type="match status" value="1"/>
</dbReference>
<dbReference type="SUPFAM" id="SSF52540">
    <property type="entry name" value="P-loop containing nucleoside triphosphate hydrolases"/>
    <property type="match status" value="1"/>
</dbReference>
<organism>
    <name type="scientific">Magnetococcus marinus (strain ATCC BAA-1437 / JCM 17883 / MC-1)</name>
    <dbReference type="NCBI Taxonomy" id="156889"/>
    <lineage>
        <taxon>Bacteria</taxon>
        <taxon>Pseudomonadati</taxon>
        <taxon>Pseudomonadota</taxon>
        <taxon>Alphaproteobacteria</taxon>
        <taxon>Magnetococcales</taxon>
        <taxon>Magnetococcaceae</taxon>
        <taxon>Magnetococcus</taxon>
    </lineage>
</organism>
<reference key="1">
    <citation type="journal article" date="2009" name="Appl. Environ. Microbiol.">
        <title>Complete genome sequence of the chemolithoautotrophic marine magnetotactic coccus strain MC-1.</title>
        <authorList>
            <person name="Schubbe S."/>
            <person name="Williams T.J."/>
            <person name="Xie G."/>
            <person name="Kiss H.E."/>
            <person name="Brettin T.S."/>
            <person name="Martinez D."/>
            <person name="Ross C.A."/>
            <person name="Schuler D."/>
            <person name="Cox B.L."/>
            <person name="Nealson K.H."/>
            <person name="Bazylinski D.A."/>
        </authorList>
    </citation>
    <scope>NUCLEOTIDE SEQUENCE [LARGE SCALE GENOMIC DNA]</scope>
    <source>
        <strain>ATCC BAA-1437 / JCM 17883 / MC-1</strain>
    </source>
</reference>
<evidence type="ECO:0000255" key="1">
    <source>
        <dbReference type="HAMAP-Rule" id="MF_00238"/>
    </source>
</evidence>
<evidence type="ECO:0000256" key="2">
    <source>
        <dbReference type="SAM" id="MobiDB-lite"/>
    </source>
</evidence>
<accession>A0L407</accession>
<protein>
    <recommendedName>
        <fullName evidence="1">Cytidylate kinase</fullName>
        <shortName evidence="1">CK</shortName>
        <ecNumber evidence="1">2.7.4.25</ecNumber>
    </recommendedName>
    <alternativeName>
        <fullName evidence="1">Cytidine monophosphate kinase</fullName>
        <shortName evidence="1">CMP kinase</shortName>
    </alternativeName>
</protein>
<gene>
    <name evidence="1" type="primary">cmk</name>
    <name type="ordered locus">Mmc1_0173</name>
</gene>
<sequence>MAERLRIAVDGPAGAGKGTVCRAVARRYQWAYLDTGAIYRAVALHALNSENFEETSLAQWAAQMDFRFEVDAQGDAHAFLEGTEVTNKLRDEQVGETASQVAAMPAVRTALLDFQRNYGSPQSVILDGRDVGTVVLPDADLKIYLTASLQARAQRRTLELQGKGESVSMDRIKSRIEERDARDQSRATAPLAAAPDAQTVDTTYLSQTESIETVARLVASLLEKP</sequence>